<sequence>MKIHFVGIGGIGMSAVALHEFLNGNDVYGSNIEETERTAYLRKLGIPIFVPHSADNWYDPDLVIKTPAVRDDNPEIVRARMERVPVENRLHYFRDILKREKKEEFAVTGTDGKTTTTAMVAHVLKHLKKSPTVFLGGIMDSLEHGNYEKGNGPVVYELDESEEFFSEFSPNYLIITNARGDHLENYGNSLSRYRSAFEKISRNTDLVVTFAEDELTSHLGDVTFGVKKGTYTLEMRSASRAEQKAVVEKNGKRYLELKLKVPGFHNVLNALAVIALFDSLGYDLAPVLEALEEFRGVHRRFSIAFHDPETNIYVIDDYAHTPDEIRNLLQTAKEVFENEKIVVIFQPHRYTRLEREDGNFAKALQLADEVVVTEVYDAFEERKNGISGKMIWDSLKSLGKEAYFVEKLPELEKVIPVSENTVFLFVGAGDIIHSSRRFVERYQSSKSSPSRVLGSNK</sequence>
<protein>
    <recommendedName>
        <fullName evidence="1">UDP-N-acetylmuramate--L-alanine ligase</fullName>
        <ecNumber evidence="1">6.3.2.8</ecNumber>
    </recommendedName>
    <alternativeName>
        <fullName evidence="1">UDP-N-acetylmuramoyl-L-alanine synthetase</fullName>
    </alternativeName>
</protein>
<gene>
    <name evidence="1" type="primary">murC</name>
    <name type="ordered locus">Tpet_0693</name>
</gene>
<accession>A5IKJ0</accession>
<feature type="chain" id="PRO_1000004432" description="UDP-N-acetylmuramate--L-alanine ligase">
    <location>
        <begin position="1"/>
        <end position="457"/>
    </location>
</feature>
<feature type="binding site" evidence="1">
    <location>
        <begin position="109"/>
        <end position="115"/>
    </location>
    <ligand>
        <name>ATP</name>
        <dbReference type="ChEBI" id="CHEBI:30616"/>
    </ligand>
</feature>
<name>MURC_THEP1</name>
<organism>
    <name type="scientific">Thermotoga petrophila (strain ATCC BAA-488 / DSM 13995 / JCM 10881 / RKU-1)</name>
    <dbReference type="NCBI Taxonomy" id="390874"/>
    <lineage>
        <taxon>Bacteria</taxon>
        <taxon>Thermotogati</taxon>
        <taxon>Thermotogota</taxon>
        <taxon>Thermotogae</taxon>
        <taxon>Thermotogales</taxon>
        <taxon>Thermotogaceae</taxon>
        <taxon>Thermotoga</taxon>
    </lineage>
</organism>
<comment type="function">
    <text evidence="1">Cell wall formation.</text>
</comment>
<comment type="catalytic activity">
    <reaction evidence="1">
        <text>UDP-N-acetyl-alpha-D-muramate + L-alanine + ATP = UDP-N-acetyl-alpha-D-muramoyl-L-alanine + ADP + phosphate + H(+)</text>
        <dbReference type="Rhea" id="RHEA:23372"/>
        <dbReference type="ChEBI" id="CHEBI:15378"/>
        <dbReference type="ChEBI" id="CHEBI:30616"/>
        <dbReference type="ChEBI" id="CHEBI:43474"/>
        <dbReference type="ChEBI" id="CHEBI:57972"/>
        <dbReference type="ChEBI" id="CHEBI:70757"/>
        <dbReference type="ChEBI" id="CHEBI:83898"/>
        <dbReference type="ChEBI" id="CHEBI:456216"/>
        <dbReference type="EC" id="6.3.2.8"/>
    </reaction>
</comment>
<comment type="pathway">
    <text evidence="1">Cell wall biogenesis; peptidoglycan biosynthesis.</text>
</comment>
<comment type="subcellular location">
    <subcellularLocation>
        <location evidence="1">Cytoplasm</location>
    </subcellularLocation>
</comment>
<comment type="similarity">
    <text evidence="1">Belongs to the MurCDEF family.</text>
</comment>
<reference key="1">
    <citation type="submission" date="2007-05" db="EMBL/GenBank/DDBJ databases">
        <title>Complete sequence of Thermotoga petrophila RKU-1.</title>
        <authorList>
            <consortium name="US DOE Joint Genome Institute"/>
            <person name="Copeland A."/>
            <person name="Lucas S."/>
            <person name="Lapidus A."/>
            <person name="Barry K."/>
            <person name="Glavina del Rio T."/>
            <person name="Dalin E."/>
            <person name="Tice H."/>
            <person name="Pitluck S."/>
            <person name="Sims D."/>
            <person name="Brettin T."/>
            <person name="Bruce D."/>
            <person name="Detter J.C."/>
            <person name="Han C."/>
            <person name="Tapia R."/>
            <person name="Schmutz J."/>
            <person name="Larimer F."/>
            <person name="Land M."/>
            <person name="Hauser L."/>
            <person name="Kyrpides N."/>
            <person name="Mikhailova N."/>
            <person name="Nelson K."/>
            <person name="Gogarten J.P."/>
            <person name="Noll K."/>
            <person name="Richardson P."/>
        </authorList>
    </citation>
    <scope>NUCLEOTIDE SEQUENCE [LARGE SCALE GENOMIC DNA]</scope>
    <source>
        <strain>ATCC BAA-488 / DSM 13995 / JCM 10881 / RKU-1</strain>
    </source>
</reference>
<evidence type="ECO:0000255" key="1">
    <source>
        <dbReference type="HAMAP-Rule" id="MF_00046"/>
    </source>
</evidence>
<dbReference type="EC" id="6.3.2.8" evidence="1"/>
<dbReference type="EMBL" id="CP000702">
    <property type="protein sequence ID" value="ABQ46713.1"/>
    <property type="molecule type" value="Genomic_DNA"/>
</dbReference>
<dbReference type="RefSeq" id="WP_011943297.1">
    <property type="nucleotide sequence ID" value="NC_009486.1"/>
</dbReference>
<dbReference type="SMR" id="A5IKJ0"/>
<dbReference type="STRING" id="390874.Tpet_0693"/>
<dbReference type="KEGG" id="tpt:Tpet_0693"/>
<dbReference type="eggNOG" id="COG0773">
    <property type="taxonomic scope" value="Bacteria"/>
</dbReference>
<dbReference type="HOGENOM" id="CLU_028104_2_2_0"/>
<dbReference type="UniPathway" id="UPA00219"/>
<dbReference type="Proteomes" id="UP000006558">
    <property type="component" value="Chromosome"/>
</dbReference>
<dbReference type="GO" id="GO:0005737">
    <property type="term" value="C:cytoplasm"/>
    <property type="evidence" value="ECO:0007669"/>
    <property type="project" value="UniProtKB-SubCell"/>
</dbReference>
<dbReference type="GO" id="GO:0005524">
    <property type="term" value="F:ATP binding"/>
    <property type="evidence" value="ECO:0007669"/>
    <property type="project" value="UniProtKB-UniRule"/>
</dbReference>
<dbReference type="GO" id="GO:0008763">
    <property type="term" value="F:UDP-N-acetylmuramate-L-alanine ligase activity"/>
    <property type="evidence" value="ECO:0007669"/>
    <property type="project" value="UniProtKB-UniRule"/>
</dbReference>
<dbReference type="GO" id="GO:0051301">
    <property type="term" value="P:cell division"/>
    <property type="evidence" value="ECO:0007669"/>
    <property type="project" value="UniProtKB-KW"/>
</dbReference>
<dbReference type="GO" id="GO:0071555">
    <property type="term" value="P:cell wall organization"/>
    <property type="evidence" value="ECO:0007669"/>
    <property type="project" value="UniProtKB-KW"/>
</dbReference>
<dbReference type="GO" id="GO:0009252">
    <property type="term" value="P:peptidoglycan biosynthetic process"/>
    <property type="evidence" value="ECO:0007669"/>
    <property type="project" value="UniProtKB-UniRule"/>
</dbReference>
<dbReference type="GO" id="GO:0008360">
    <property type="term" value="P:regulation of cell shape"/>
    <property type="evidence" value="ECO:0007669"/>
    <property type="project" value="UniProtKB-KW"/>
</dbReference>
<dbReference type="Gene3D" id="3.90.190.20">
    <property type="entry name" value="Mur ligase, C-terminal domain"/>
    <property type="match status" value="1"/>
</dbReference>
<dbReference type="Gene3D" id="3.40.1190.10">
    <property type="entry name" value="Mur-like, catalytic domain"/>
    <property type="match status" value="1"/>
</dbReference>
<dbReference type="Gene3D" id="3.40.50.720">
    <property type="entry name" value="NAD(P)-binding Rossmann-like Domain"/>
    <property type="match status" value="1"/>
</dbReference>
<dbReference type="HAMAP" id="MF_00046">
    <property type="entry name" value="MurC"/>
    <property type="match status" value="1"/>
</dbReference>
<dbReference type="InterPro" id="IPR036565">
    <property type="entry name" value="Mur-like_cat_sf"/>
</dbReference>
<dbReference type="InterPro" id="IPR004101">
    <property type="entry name" value="Mur_ligase_C"/>
</dbReference>
<dbReference type="InterPro" id="IPR036615">
    <property type="entry name" value="Mur_ligase_C_dom_sf"/>
</dbReference>
<dbReference type="InterPro" id="IPR013221">
    <property type="entry name" value="Mur_ligase_cen"/>
</dbReference>
<dbReference type="InterPro" id="IPR000713">
    <property type="entry name" value="Mur_ligase_N"/>
</dbReference>
<dbReference type="InterPro" id="IPR050061">
    <property type="entry name" value="MurCDEF_pg_biosynth"/>
</dbReference>
<dbReference type="InterPro" id="IPR005758">
    <property type="entry name" value="UDP-N-AcMur_Ala_ligase_MurC"/>
</dbReference>
<dbReference type="NCBIfam" id="TIGR01082">
    <property type="entry name" value="murC"/>
    <property type="match status" value="1"/>
</dbReference>
<dbReference type="PANTHER" id="PTHR43445:SF3">
    <property type="entry name" value="UDP-N-ACETYLMURAMATE--L-ALANINE LIGASE"/>
    <property type="match status" value="1"/>
</dbReference>
<dbReference type="PANTHER" id="PTHR43445">
    <property type="entry name" value="UDP-N-ACETYLMURAMATE--L-ALANINE LIGASE-RELATED"/>
    <property type="match status" value="1"/>
</dbReference>
<dbReference type="Pfam" id="PF01225">
    <property type="entry name" value="Mur_ligase"/>
    <property type="match status" value="1"/>
</dbReference>
<dbReference type="Pfam" id="PF02875">
    <property type="entry name" value="Mur_ligase_C"/>
    <property type="match status" value="1"/>
</dbReference>
<dbReference type="Pfam" id="PF08245">
    <property type="entry name" value="Mur_ligase_M"/>
    <property type="match status" value="1"/>
</dbReference>
<dbReference type="SUPFAM" id="SSF51984">
    <property type="entry name" value="MurCD N-terminal domain"/>
    <property type="match status" value="1"/>
</dbReference>
<dbReference type="SUPFAM" id="SSF53623">
    <property type="entry name" value="MurD-like peptide ligases, catalytic domain"/>
    <property type="match status" value="1"/>
</dbReference>
<dbReference type="SUPFAM" id="SSF53244">
    <property type="entry name" value="MurD-like peptide ligases, peptide-binding domain"/>
    <property type="match status" value="1"/>
</dbReference>
<proteinExistence type="inferred from homology"/>
<keyword id="KW-0067">ATP-binding</keyword>
<keyword id="KW-0131">Cell cycle</keyword>
<keyword id="KW-0132">Cell division</keyword>
<keyword id="KW-0133">Cell shape</keyword>
<keyword id="KW-0961">Cell wall biogenesis/degradation</keyword>
<keyword id="KW-0963">Cytoplasm</keyword>
<keyword id="KW-0436">Ligase</keyword>
<keyword id="KW-0547">Nucleotide-binding</keyword>
<keyword id="KW-0573">Peptidoglycan synthesis</keyword>